<comment type="function">
    <text evidence="2">Required for the transport across the inner membrane of sulfolipid-1 (SL-1), which is a major cell wall lipid of pathogenic mycobacteria. Could also transport SL1278 (2-palmitoyl-3-(C43)-phthioceranyl-alpha, alpha'-D-trehalose-2'-sulfate), which is the precursor of SL-1. May potentiate SL-1 levels and confer specificity for sulfolipids over structurally similar glycolipids.</text>
</comment>
<comment type="subcellular location">
    <subcellularLocation>
        <location evidence="5">Cell inner membrane</location>
        <topology evidence="1">Multi-pass membrane protein</topology>
    </subcellularLocation>
</comment>
<comment type="disruption phenotype">
    <text evidence="2">Accumulates the precursor SL1278. Can produce SL-1, albeit at reduced levels.</text>
</comment>
<comment type="similarity">
    <text evidence="4">Belongs to the peptidoglycolipid addressing protein (GAP) (TC 2.A.116) family.</text>
</comment>
<gene>
    <name evidence="3" type="primary">sap</name>
    <name evidence="7" type="ordered locus">Rv3821</name>
    <name evidence="6" type="ordered locus">RVBD_3821</name>
    <name evidence="8" type="ORF">P425_03979</name>
</gene>
<proteinExistence type="evidence at protein level"/>
<protein>
    <recommendedName>
        <fullName evidence="4">Sulfolipid-1 exporter Sap</fullName>
    </recommendedName>
    <alternativeName>
        <fullName evidence="3">Sulfolipid-1-addressing protein</fullName>
    </alternativeName>
</protein>
<sequence>MWSTVLVLALSVICEPVRIGLVVLMLNRRRPLLHLLTFLCGGYTMAGGVAMVTLVVLGATPLAGHFSVAEVQIGTGLIALLIAFALTTNVIGKHVRRATHARVGDDGGRVLRESVPPSGAHKLAVRARCFLQGDSLYVAGVSGLGAALPSANYMGAMAAILASGATPATQALAVVTFNVVAFTVAEVPLVSYLAAPRKTRAFMAALQSWLRSRSRRDAALLVAAGGCLMLTLGLSNL</sequence>
<keyword id="KW-0997">Cell inner membrane</keyword>
<keyword id="KW-1003">Cell membrane</keyword>
<keyword id="KW-0961">Cell wall biogenesis/degradation</keyword>
<keyword id="KW-0445">Lipid transport</keyword>
<keyword id="KW-0472">Membrane</keyword>
<keyword id="KW-1185">Reference proteome</keyword>
<keyword id="KW-0812">Transmembrane</keyword>
<keyword id="KW-1133">Transmembrane helix</keyword>
<keyword id="KW-0813">Transport</keyword>
<reference key="1">
    <citation type="journal article" date="1998" name="Nature">
        <title>Deciphering the biology of Mycobacterium tuberculosis from the complete genome sequence.</title>
        <authorList>
            <person name="Cole S.T."/>
            <person name="Brosch R."/>
            <person name="Parkhill J."/>
            <person name="Garnier T."/>
            <person name="Churcher C.M."/>
            <person name="Harris D.E."/>
            <person name="Gordon S.V."/>
            <person name="Eiglmeier K."/>
            <person name="Gas S."/>
            <person name="Barry C.E. III"/>
            <person name="Tekaia F."/>
            <person name="Badcock K."/>
            <person name="Basham D."/>
            <person name="Brown D."/>
            <person name="Chillingworth T."/>
            <person name="Connor R."/>
            <person name="Davies R.M."/>
            <person name="Devlin K."/>
            <person name="Feltwell T."/>
            <person name="Gentles S."/>
            <person name="Hamlin N."/>
            <person name="Holroyd S."/>
            <person name="Hornsby T."/>
            <person name="Jagels K."/>
            <person name="Krogh A."/>
            <person name="McLean J."/>
            <person name="Moule S."/>
            <person name="Murphy L.D."/>
            <person name="Oliver S."/>
            <person name="Osborne J."/>
            <person name="Quail M.A."/>
            <person name="Rajandream M.A."/>
            <person name="Rogers J."/>
            <person name="Rutter S."/>
            <person name="Seeger K."/>
            <person name="Skelton S."/>
            <person name="Squares S."/>
            <person name="Squares R."/>
            <person name="Sulston J.E."/>
            <person name="Taylor K."/>
            <person name="Whitehead S."/>
            <person name="Barrell B.G."/>
        </authorList>
    </citation>
    <scope>NUCLEOTIDE SEQUENCE [LARGE SCALE GENOMIC DNA]</scope>
    <source>
        <strain>ATCC 25618 / H37Rv</strain>
    </source>
</reference>
<reference key="2">
    <citation type="submission" date="2013-11" db="EMBL/GenBank/DDBJ databases">
        <title>The genome sequence of Mycobacterium tuberculosis H37Rv.</title>
        <authorList>
            <consortium name="The Broad Institute Genome Sequencing Platform"/>
            <person name="Galagan J."/>
            <person name="Kreiswirth B."/>
            <person name="Dobos K."/>
            <person name="Fortune S."/>
            <person name="Fitzgerald M."/>
            <person name="Young S.K."/>
            <person name="Zeng Q."/>
            <person name="Gargeya S."/>
            <person name="Abouelleil A."/>
            <person name="Alvarado L."/>
            <person name="Berlin A.M."/>
            <person name="Chapman S.B."/>
            <person name="Gainer-Dewar J."/>
            <person name="Goldberg J."/>
            <person name="Gnerre S."/>
            <person name="Griggs A."/>
            <person name="Gujja S."/>
            <person name="Hansen M."/>
            <person name="Howarth C."/>
            <person name="Imamovic A."/>
            <person name="Larimer J."/>
            <person name="McCowan C."/>
            <person name="Murphy C."/>
            <person name="Pearson M."/>
            <person name="Poon T."/>
            <person name="Priest M."/>
            <person name="Roberts A."/>
            <person name="Saif S."/>
            <person name="Shea T."/>
            <person name="Sykes S."/>
            <person name="Wortman J."/>
            <person name="Nusbaum C."/>
            <person name="Birren B."/>
        </authorList>
    </citation>
    <scope>NUCLEOTIDE SEQUENCE [LARGE SCALE GENOMIC DNA]</scope>
    <source>
        <strain>ATCC 25618 / H37Rv</strain>
    </source>
</reference>
<reference key="3">
    <citation type="submission" date="2014-04" db="EMBL/GenBank/DDBJ databases">
        <title>The genome sequence of Mycobacterium tuberculosis H37Rv.</title>
        <authorList>
            <consortium name="The Broad Institute Genomics Platform"/>
            <consortium name="The Broad Institute Genome Sequencing Center for Infectious Disease"/>
            <person name="Earl A.M."/>
            <person name="Kreiswirth B."/>
            <person name="Gomez J."/>
            <person name="Victor T."/>
            <person name="Desjardins C."/>
            <person name="Abeel T."/>
            <person name="Young S."/>
            <person name="Zeng Q."/>
            <person name="Gargeya S."/>
            <person name="Abouelleil A."/>
            <person name="Alvarado L."/>
            <person name="Chapman S.B."/>
            <person name="Gainer-Dewar J."/>
            <person name="Goldberg J."/>
            <person name="Griggs A."/>
            <person name="Gujja S."/>
            <person name="Hansen M."/>
            <person name="Howarth C."/>
            <person name="Imamovic A."/>
            <person name="Larimer J."/>
            <person name="Murphy C."/>
            <person name="Naylor J."/>
            <person name="Pearson M."/>
            <person name="Poon T.W."/>
            <person name="Priest M."/>
            <person name="Roberts A."/>
            <person name="Saif S."/>
            <person name="Shea T."/>
            <person name="Sykes S."/>
            <person name="Wortman J."/>
            <person name="Nusbaum C."/>
            <person name="Birren B."/>
        </authorList>
    </citation>
    <scope>NUCLEOTIDE SEQUENCE [LARGE SCALE GENOMIC DNA]</scope>
    <source>
        <strain>ATCC 25618 / H37Rv</strain>
    </source>
</reference>
<reference key="4">
    <citation type="journal article" date="2012" name="J. Biol. Chem.">
        <title>Elucidation and chemical modulation of sulfolipid-1 biosynthesis in Mycobacterium tuberculosis.</title>
        <authorList>
            <person name="Seeliger J.C."/>
            <person name="Holsclaw C.M."/>
            <person name="Schelle M.W."/>
            <person name="Botyanszki Z."/>
            <person name="Gilmore S.A."/>
            <person name="Tully S.E."/>
            <person name="Niederweis M."/>
            <person name="Cravatt B.F."/>
            <person name="Leary J.A."/>
            <person name="Bertozzi C.R."/>
        </authorList>
    </citation>
    <scope>FUNCTION IN TRANSPORT</scope>
    <scope>SUBCELLULAR LOCATION</scope>
    <scope>DISRUPTION PHENOTYPE</scope>
    <source>
        <strain>ATCC 35801 / TMC 107 / Erdman</strain>
    </source>
</reference>
<feature type="chain" id="PRO_0000432808" description="Sulfolipid-1 exporter Sap">
    <location>
        <begin position="1"/>
        <end position="237"/>
    </location>
</feature>
<feature type="transmembrane region" description="Helical" evidence="1">
    <location>
        <begin position="5"/>
        <end position="25"/>
    </location>
</feature>
<feature type="transmembrane region" description="Helical" evidence="1">
    <location>
        <begin position="38"/>
        <end position="58"/>
    </location>
</feature>
<feature type="transmembrane region" description="Helical" evidence="1">
    <location>
        <begin position="66"/>
        <end position="86"/>
    </location>
</feature>
<feature type="transmembrane region" description="Helical" evidence="1">
    <location>
        <begin position="141"/>
        <end position="161"/>
    </location>
</feature>
<feature type="transmembrane region" description="Helical" evidence="1">
    <location>
        <begin position="171"/>
        <end position="191"/>
    </location>
</feature>
<feature type="transmembrane region" description="Helical" evidence="1">
    <location>
        <begin position="217"/>
        <end position="237"/>
    </location>
</feature>
<name>SAP_MYCTU</name>
<accession>O07802</accession>
<accession>F2GDI0</accession>
<accession>I6YD44</accession>
<accession>Q7D4T3</accession>
<evidence type="ECO:0000255" key="1"/>
<evidence type="ECO:0000269" key="2">
    <source>
    </source>
</evidence>
<evidence type="ECO:0000303" key="3">
    <source>
    </source>
</evidence>
<evidence type="ECO:0000305" key="4"/>
<evidence type="ECO:0000305" key="5">
    <source>
    </source>
</evidence>
<evidence type="ECO:0000312" key="6">
    <source>
        <dbReference type="EMBL" id="AFN51847.1"/>
    </source>
</evidence>
<evidence type="ECO:0000312" key="7">
    <source>
        <dbReference type="EMBL" id="CCP46650.1"/>
    </source>
</evidence>
<evidence type="ECO:0000312" key="8">
    <source>
        <dbReference type="EMBL" id="KBJ24898.1"/>
    </source>
</evidence>
<dbReference type="EMBL" id="CP003248">
    <property type="protein sequence ID" value="AFN51847.1"/>
    <property type="molecule type" value="Genomic_DNA"/>
</dbReference>
<dbReference type="EMBL" id="AL123456">
    <property type="protein sequence ID" value="CCP46650.1"/>
    <property type="molecule type" value="Genomic_DNA"/>
</dbReference>
<dbReference type="EMBL" id="JLDD01000048">
    <property type="protein sequence ID" value="KBJ24898.1"/>
    <property type="molecule type" value="Genomic_DNA"/>
</dbReference>
<dbReference type="RefSeq" id="NP_218338.1">
    <property type="nucleotide sequence ID" value="NC_000962.3"/>
</dbReference>
<dbReference type="RefSeq" id="WP_003420848.1">
    <property type="nucleotide sequence ID" value="NZ_NVQJ01000022.1"/>
</dbReference>
<dbReference type="STRING" id="83332.Rv3821"/>
<dbReference type="TCDB" id="2.A.116.1.2">
    <property type="family name" value="the peptidoglycolipid addressing protein (gap) family"/>
</dbReference>
<dbReference type="PaxDb" id="83332-Rv3821"/>
<dbReference type="DNASU" id="886141"/>
<dbReference type="GeneID" id="886141"/>
<dbReference type="KEGG" id="mtu:Rv3821"/>
<dbReference type="KEGG" id="mtv:RVBD_3821"/>
<dbReference type="PATRIC" id="fig|83332.111.peg.4247"/>
<dbReference type="TubercuList" id="Rv3821"/>
<dbReference type="eggNOG" id="ENOG5033YWV">
    <property type="taxonomic scope" value="Bacteria"/>
</dbReference>
<dbReference type="HOGENOM" id="CLU_068662_0_0_11"/>
<dbReference type="InParanoid" id="O07802"/>
<dbReference type="OrthoDB" id="4627762at2"/>
<dbReference type="PhylomeDB" id="O07802"/>
<dbReference type="Proteomes" id="UP000001584">
    <property type="component" value="Chromosome"/>
</dbReference>
<dbReference type="GO" id="GO:0005886">
    <property type="term" value="C:plasma membrane"/>
    <property type="evidence" value="ECO:0007669"/>
    <property type="project" value="UniProtKB-SubCell"/>
</dbReference>
<dbReference type="GO" id="GO:0071555">
    <property type="term" value="P:cell wall organization"/>
    <property type="evidence" value="ECO:0007669"/>
    <property type="project" value="UniProtKB-KW"/>
</dbReference>
<dbReference type="GO" id="GO:0006869">
    <property type="term" value="P:lipid transport"/>
    <property type="evidence" value="ECO:0007669"/>
    <property type="project" value="UniProtKB-KW"/>
</dbReference>
<dbReference type="InterPro" id="IPR021315">
    <property type="entry name" value="Gap/Sap"/>
</dbReference>
<dbReference type="Pfam" id="PF11139">
    <property type="entry name" value="SfLAP"/>
    <property type="match status" value="1"/>
</dbReference>
<organism>
    <name type="scientific">Mycobacterium tuberculosis (strain ATCC 25618 / H37Rv)</name>
    <dbReference type="NCBI Taxonomy" id="83332"/>
    <lineage>
        <taxon>Bacteria</taxon>
        <taxon>Bacillati</taxon>
        <taxon>Actinomycetota</taxon>
        <taxon>Actinomycetes</taxon>
        <taxon>Mycobacteriales</taxon>
        <taxon>Mycobacteriaceae</taxon>
        <taxon>Mycobacterium</taxon>
        <taxon>Mycobacterium tuberculosis complex</taxon>
    </lineage>
</organism>